<gene>
    <name evidence="1" type="primary">pyrH</name>
    <name type="ordered locus">CFF8240_1214</name>
</gene>
<proteinExistence type="inferred from homology"/>
<name>PYRH_CAMFF</name>
<feature type="chain" id="PRO_1000053899" description="Uridylate kinase">
    <location>
        <begin position="1"/>
        <end position="238"/>
    </location>
</feature>
<feature type="region of interest" description="Involved in allosteric activation by GTP" evidence="1">
    <location>
        <begin position="18"/>
        <end position="23"/>
    </location>
</feature>
<feature type="binding site" evidence="1">
    <location>
        <begin position="10"/>
        <end position="13"/>
    </location>
    <ligand>
        <name>ATP</name>
        <dbReference type="ChEBI" id="CHEBI:30616"/>
    </ligand>
</feature>
<feature type="binding site" evidence="1">
    <location>
        <position position="52"/>
    </location>
    <ligand>
        <name>UMP</name>
        <dbReference type="ChEBI" id="CHEBI:57865"/>
    </ligand>
</feature>
<feature type="binding site" evidence="1">
    <location>
        <position position="53"/>
    </location>
    <ligand>
        <name>ATP</name>
        <dbReference type="ChEBI" id="CHEBI:30616"/>
    </ligand>
</feature>
<feature type="binding site" evidence="1">
    <location>
        <position position="57"/>
    </location>
    <ligand>
        <name>ATP</name>
        <dbReference type="ChEBI" id="CHEBI:30616"/>
    </ligand>
</feature>
<feature type="binding site" evidence="1">
    <location>
        <position position="73"/>
    </location>
    <ligand>
        <name>UMP</name>
        <dbReference type="ChEBI" id="CHEBI:57865"/>
    </ligand>
</feature>
<feature type="binding site" evidence="1">
    <location>
        <begin position="134"/>
        <end position="141"/>
    </location>
    <ligand>
        <name>UMP</name>
        <dbReference type="ChEBI" id="CHEBI:57865"/>
    </ligand>
</feature>
<feature type="binding site" evidence="1">
    <location>
        <position position="161"/>
    </location>
    <ligand>
        <name>ATP</name>
        <dbReference type="ChEBI" id="CHEBI:30616"/>
    </ligand>
</feature>
<feature type="binding site" evidence="1">
    <location>
        <position position="167"/>
    </location>
    <ligand>
        <name>ATP</name>
        <dbReference type="ChEBI" id="CHEBI:30616"/>
    </ligand>
</feature>
<feature type="binding site" evidence="1">
    <location>
        <position position="170"/>
    </location>
    <ligand>
        <name>ATP</name>
        <dbReference type="ChEBI" id="CHEBI:30616"/>
    </ligand>
</feature>
<protein>
    <recommendedName>
        <fullName evidence="1">Uridylate kinase</fullName>
        <shortName evidence="1">UK</shortName>
        <ecNumber evidence="1">2.7.4.22</ecNumber>
    </recommendedName>
    <alternativeName>
        <fullName evidence="1">Uridine monophosphate kinase</fullName>
        <shortName evidence="1">UMP kinase</shortName>
        <shortName evidence="1">UMPK</shortName>
    </alternativeName>
</protein>
<sequence>MSDKKRVLVKFSGEALAGGNGFGIDTHILKYIAGEIKGLVLNGIEIGIVIGGGNIIRGVSAAKDGIIKRTSGDHMGMLATVINAIAMREALEYSGLSVRVQSAIKMEAICETFIMGRAQRHLEKGRVVIFAAGTGNPFFTTDTAATLRAIEIDANMIIKATKVNGVYDRDPMKFEDAVLLNEISYERAMEDNIKVMDDTAIALAKDNKLPIVVCNMFEEGNLLKIANGDYTNCSVVKN</sequence>
<dbReference type="EC" id="2.7.4.22" evidence="1"/>
<dbReference type="EMBL" id="CP000487">
    <property type="protein sequence ID" value="ABK82810.1"/>
    <property type="molecule type" value="Genomic_DNA"/>
</dbReference>
<dbReference type="RefSeq" id="WP_002849882.1">
    <property type="nucleotide sequence ID" value="NC_008599.1"/>
</dbReference>
<dbReference type="SMR" id="A0RQ89"/>
<dbReference type="GeneID" id="61065039"/>
<dbReference type="KEGG" id="cff:CFF8240_1214"/>
<dbReference type="eggNOG" id="COG0528">
    <property type="taxonomic scope" value="Bacteria"/>
</dbReference>
<dbReference type="HOGENOM" id="CLU_033861_0_0_7"/>
<dbReference type="UniPathway" id="UPA00159">
    <property type="reaction ID" value="UER00275"/>
</dbReference>
<dbReference type="Proteomes" id="UP000000760">
    <property type="component" value="Chromosome"/>
</dbReference>
<dbReference type="GO" id="GO:0005829">
    <property type="term" value="C:cytosol"/>
    <property type="evidence" value="ECO:0007669"/>
    <property type="project" value="TreeGrafter"/>
</dbReference>
<dbReference type="GO" id="GO:0005524">
    <property type="term" value="F:ATP binding"/>
    <property type="evidence" value="ECO:0007669"/>
    <property type="project" value="UniProtKB-KW"/>
</dbReference>
<dbReference type="GO" id="GO:0033862">
    <property type="term" value="F:UMP kinase activity"/>
    <property type="evidence" value="ECO:0007669"/>
    <property type="project" value="UniProtKB-EC"/>
</dbReference>
<dbReference type="GO" id="GO:0044210">
    <property type="term" value="P:'de novo' CTP biosynthetic process"/>
    <property type="evidence" value="ECO:0007669"/>
    <property type="project" value="UniProtKB-UniRule"/>
</dbReference>
<dbReference type="GO" id="GO:0006225">
    <property type="term" value="P:UDP biosynthetic process"/>
    <property type="evidence" value="ECO:0007669"/>
    <property type="project" value="TreeGrafter"/>
</dbReference>
<dbReference type="CDD" id="cd04254">
    <property type="entry name" value="AAK_UMPK-PyrH-Ec"/>
    <property type="match status" value="1"/>
</dbReference>
<dbReference type="FunFam" id="3.40.1160.10:FF:000001">
    <property type="entry name" value="Uridylate kinase"/>
    <property type="match status" value="1"/>
</dbReference>
<dbReference type="Gene3D" id="3.40.1160.10">
    <property type="entry name" value="Acetylglutamate kinase-like"/>
    <property type="match status" value="1"/>
</dbReference>
<dbReference type="HAMAP" id="MF_01220_B">
    <property type="entry name" value="PyrH_B"/>
    <property type="match status" value="1"/>
</dbReference>
<dbReference type="InterPro" id="IPR036393">
    <property type="entry name" value="AceGlu_kinase-like_sf"/>
</dbReference>
<dbReference type="InterPro" id="IPR001048">
    <property type="entry name" value="Asp/Glu/Uridylate_kinase"/>
</dbReference>
<dbReference type="InterPro" id="IPR011817">
    <property type="entry name" value="Uridylate_kinase"/>
</dbReference>
<dbReference type="InterPro" id="IPR015963">
    <property type="entry name" value="Uridylate_kinase_bac"/>
</dbReference>
<dbReference type="NCBIfam" id="TIGR02075">
    <property type="entry name" value="pyrH_bact"/>
    <property type="match status" value="1"/>
</dbReference>
<dbReference type="PANTHER" id="PTHR42833">
    <property type="entry name" value="URIDYLATE KINASE"/>
    <property type="match status" value="1"/>
</dbReference>
<dbReference type="PANTHER" id="PTHR42833:SF4">
    <property type="entry name" value="URIDYLATE KINASE PUMPKIN, CHLOROPLASTIC"/>
    <property type="match status" value="1"/>
</dbReference>
<dbReference type="Pfam" id="PF00696">
    <property type="entry name" value="AA_kinase"/>
    <property type="match status" value="1"/>
</dbReference>
<dbReference type="PIRSF" id="PIRSF005650">
    <property type="entry name" value="Uridylate_kin"/>
    <property type="match status" value="1"/>
</dbReference>
<dbReference type="SUPFAM" id="SSF53633">
    <property type="entry name" value="Carbamate kinase-like"/>
    <property type="match status" value="1"/>
</dbReference>
<comment type="function">
    <text evidence="1">Catalyzes the reversible phosphorylation of UMP to UDP.</text>
</comment>
<comment type="catalytic activity">
    <reaction evidence="1">
        <text>UMP + ATP = UDP + ADP</text>
        <dbReference type="Rhea" id="RHEA:24400"/>
        <dbReference type="ChEBI" id="CHEBI:30616"/>
        <dbReference type="ChEBI" id="CHEBI:57865"/>
        <dbReference type="ChEBI" id="CHEBI:58223"/>
        <dbReference type="ChEBI" id="CHEBI:456216"/>
        <dbReference type="EC" id="2.7.4.22"/>
    </reaction>
</comment>
<comment type="activity regulation">
    <text evidence="1">Allosterically activated by GTP. Inhibited by UTP.</text>
</comment>
<comment type="pathway">
    <text evidence="1">Pyrimidine metabolism; CTP biosynthesis via de novo pathway; UDP from UMP (UMPK route): step 1/1.</text>
</comment>
<comment type="subunit">
    <text evidence="1">Homohexamer.</text>
</comment>
<comment type="subcellular location">
    <subcellularLocation>
        <location evidence="1">Cytoplasm</location>
    </subcellularLocation>
</comment>
<comment type="similarity">
    <text evidence="1">Belongs to the UMP kinase family.</text>
</comment>
<keyword id="KW-0021">Allosteric enzyme</keyword>
<keyword id="KW-0067">ATP-binding</keyword>
<keyword id="KW-0963">Cytoplasm</keyword>
<keyword id="KW-0418">Kinase</keyword>
<keyword id="KW-0547">Nucleotide-binding</keyword>
<keyword id="KW-0665">Pyrimidine biosynthesis</keyword>
<keyword id="KW-0808">Transferase</keyword>
<organism>
    <name type="scientific">Campylobacter fetus subsp. fetus (strain 82-40)</name>
    <dbReference type="NCBI Taxonomy" id="360106"/>
    <lineage>
        <taxon>Bacteria</taxon>
        <taxon>Pseudomonadati</taxon>
        <taxon>Campylobacterota</taxon>
        <taxon>Epsilonproteobacteria</taxon>
        <taxon>Campylobacterales</taxon>
        <taxon>Campylobacteraceae</taxon>
        <taxon>Campylobacter</taxon>
    </lineage>
</organism>
<evidence type="ECO:0000255" key="1">
    <source>
        <dbReference type="HAMAP-Rule" id="MF_01220"/>
    </source>
</evidence>
<reference key="1">
    <citation type="submission" date="2006-11" db="EMBL/GenBank/DDBJ databases">
        <title>Sequence of Campylobacter fetus subsp. fetus 82-40.</title>
        <authorList>
            <person name="Fouts D.E."/>
            <person name="Nelson K.E."/>
        </authorList>
    </citation>
    <scope>NUCLEOTIDE SEQUENCE [LARGE SCALE GENOMIC DNA]</scope>
    <source>
        <strain>82-40</strain>
    </source>
</reference>
<accession>A0RQ89</accession>